<evidence type="ECO:0000255" key="1">
    <source>
        <dbReference type="HAMAP-Rule" id="MF_00183"/>
    </source>
</evidence>
<comment type="function">
    <text evidence="1">Catalyzes the NADPH-dependent rearrangement and reduction of 1-deoxy-D-xylulose-5-phosphate (DXP) to 2-C-methyl-D-erythritol 4-phosphate (MEP).</text>
</comment>
<comment type="catalytic activity">
    <reaction evidence="1">
        <text>2-C-methyl-D-erythritol 4-phosphate + NADP(+) = 1-deoxy-D-xylulose 5-phosphate + NADPH + H(+)</text>
        <dbReference type="Rhea" id="RHEA:13717"/>
        <dbReference type="ChEBI" id="CHEBI:15378"/>
        <dbReference type="ChEBI" id="CHEBI:57783"/>
        <dbReference type="ChEBI" id="CHEBI:57792"/>
        <dbReference type="ChEBI" id="CHEBI:58262"/>
        <dbReference type="ChEBI" id="CHEBI:58349"/>
        <dbReference type="EC" id="1.1.1.267"/>
    </reaction>
    <physiologicalReaction direction="right-to-left" evidence="1">
        <dbReference type="Rhea" id="RHEA:13719"/>
    </physiologicalReaction>
</comment>
<comment type="cofactor">
    <cofactor evidence="1">
        <name>Mg(2+)</name>
        <dbReference type="ChEBI" id="CHEBI:18420"/>
    </cofactor>
    <cofactor evidence="1">
        <name>Mn(2+)</name>
        <dbReference type="ChEBI" id="CHEBI:29035"/>
    </cofactor>
</comment>
<comment type="pathway">
    <text evidence="1">Isoprenoid biosynthesis; isopentenyl diphosphate biosynthesis via DXP pathway; isopentenyl diphosphate from 1-deoxy-D-xylulose 5-phosphate: step 1/6.</text>
</comment>
<comment type="similarity">
    <text evidence="1">Belongs to the DXR family.</text>
</comment>
<reference key="1">
    <citation type="journal article" date="2010" name="Appl. Environ. Microbiol.">
        <title>Conserved symbiotic plasmid DNA sequences in the multireplicon pangenomic structure of Rhizobium etli.</title>
        <authorList>
            <person name="Gonzalez V."/>
            <person name="Acosta J.L."/>
            <person name="Santamaria R.I."/>
            <person name="Bustos P."/>
            <person name="Fernandez J.L."/>
            <person name="Hernandez Gonzalez I.L."/>
            <person name="Diaz R."/>
            <person name="Flores M."/>
            <person name="Palacios R."/>
            <person name="Mora J."/>
            <person name="Davila G."/>
        </authorList>
    </citation>
    <scope>NUCLEOTIDE SEQUENCE [LARGE SCALE GENOMIC DNA]</scope>
    <source>
        <strain>CIAT 652</strain>
    </source>
</reference>
<proteinExistence type="inferred from homology"/>
<name>DXR_RHIE6</name>
<keyword id="KW-0414">Isoprene biosynthesis</keyword>
<keyword id="KW-0464">Manganese</keyword>
<keyword id="KW-0479">Metal-binding</keyword>
<keyword id="KW-0521">NADP</keyword>
<keyword id="KW-0560">Oxidoreductase</keyword>
<protein>
    <recommendedName>
        <fullName evidence="1">1-deoxy-D-xylulose 5-phosphate reductoisomerase</fullName>
        <shortName evidence="1">DXP reductoisomerase</shortName>
        <ecNumber evidence="1">1.1.1.267</ecNumber>
    </recommendedName>
    <alternativeName>
        <fullName evidence="1">1-deoxyxylulose-5-phosphate reductoisomerase</fullName>
    </alternativeName>
    <alternativeName>
        <fullName evidence="1">2-C-methyl-D-erythritol 4-phosphate synthase</fullName>
    </alternativeName>
</protein>
<dbReference type="EC" id="1.1.1.267" evidence="1"/>
<dbReference type="EMBL" id="CP001074">
    <property type="protein sequence ID" value="ACE93049.1"/>
    <property type="molecule type" value="Genomic_DNA"/>
</dbReference>
<dbReference type="SMR" id="B3PQ37"/>
<dbReference type="KEGG" id="rec:RHECIAT_CH0004120"/>
<dbReference type="eggNOG" id="COG0743">
    <property type="taxonomic scope" value="Bacteria"/>
</dbReference>
<dbReference type="HOGENOM" id="CLU_035714_0_1_5"/>
<dbReference type="UniPathway" id="UPA00056">
    <property type="reaction ID" value="UER00092"/>
</dbReference>
<dbReference type="Proteomes" id="UP000008817">
    <property type="component" value="Chromosome"/>
</dbReference>
<dbReference type="GO" id="GO:0030604">
    <property type="term" value="F:1-deoxy-D-xylulose-5-phosphate reductoisomerase activity"/>
    <property type="evidence" value="ECO:0007669"/>
    <property type="project" value="UniProtKB-UniRule"/>
</dbReference>
<dbReference type="GO" id="GO:0030145">
    <property type="term" value="F:manganese ion binding"/>
    <property type="evidence" value="ECO:0007669"/>
    <property type="project" value="TreeGrafter"/>
</dbReference>
<dbReference type="GO" id="GO:0070402">
    <property type="term" value="F:NADPH binding"/>
    <property type="evidence" value="ECO:0007669"/>
    <property type="project" value="InterPro"/>
</dbReference>
<dbReference type="GO" id="GO:0051484">
    <property type="term" value="P:isopentenyl diphosphate biosynthetic process, methylerythritol 4-phosphate pathway involved in terpenoid biosynthetic process"/>
    <property type="evidence" value="ECO:0007669"/>
    <property type="project" value="TreeGrafter"/>
</dbReference>
<dbReference type="FunFam" id="3.40.50.720:FF:000045">
    <property type="entry name" value="1-deoxy-D-xylulose 5-phosphate reductoisomerase"/>
    <property type="match status" value="1"/>
</dbReference>
<dbReference type="Gene3D" id="1.10.1740.10">
    <property type="match status" value="1"/>
</dbReference>
<dbReference type="Gene3D" id="3.40.50.720">
    <property type="entry name" value="NAD(P)-binding Rossmann-like Domain"/>
    <property type="match status" value="1"/>
</dbReference>
<dbReference type="HAMAP" id="MF_00183">
    <property type="entry name" value="DXP_reductoisom"/>
    <property type="match status" value="1"/>
</dbReference>
<dbReference type="InterPro" id="IPR003821">
    <property type="entry name" value="DXP_reductoisomerase"/>
</dbReference>
<dbReference type="InterPro" id="IPR013644">
    <property type="entry name" value="DXP_reductoisomerase_C"/>
</dbReference>
<dbReference type="InterPro" id="IPR013512">
    <property type="entry name" value="DXP_reductoisomerase_N"/>
</dbReference>
<dbReference type="InterPro" id="IPR026877">
    <property type="entry name" value="DXPR_C"/>
</dbReference>
<dbReference type="InterPro" id="IPR036169">
    <property type="entry name" value="DXPR_C_sf"/>
</dbReference>
<dbReference type="InterPro" id="IPR036291">
    <property type="entry name" value="NAD(P)-bd_dom_sf"/>
</dbReference>
<dbReference type="NCBIfam" id="TIGR00243">
    <property type="entry name" value="Dxr"/>
    <property type="match status" value="1"/>
</dbReference>
<dbReference type="PANTHER" id="PTHR30525">
    <property type="entry name" value="1-DEOXY-D-XYLULOSE 5-PHOSPHATE REDUCTOISOMERASE"/>
    <property type="match status" value="1"/>
</dbReference>
<dbReference type="PANTHER" id="PTHR30525:SF0">
    <property type="entry name" value="1-DEOXY-D-XYLULOSE 5-PHOSPHATE REDUCTOISOMERASE, CHLOROPLASTIC"/>
    <property type="match status" value="1"/>
</dbReference>
<dbReference type="Pfam" id="PF08436">
    <property type="entry name" value="DXP_redisom_C"/>
    <property type="match status" value="1"/>
</dbReference>
<dbReference type="Pfam" id="PF02670">
    <property type="entry name" value="DXP_reductoisom"/>
    <property type="match status" value="1"/>
</dbReference>
<dbReference type="Pfam" id="PF13288">
    <property type="entry name" value="DXPR_C"/>
    <property type="match status" value="1"/>
</dbReference>
<dbReference type="PIRSF" id="PIRSF006205">
    <property type="entry name" value="Dxp_reductismrs"/>
    <property type="match status" value="1"/>
</dbReference>
<dbReference type="SUPFAM" id="SSF69055">
    <property type="entry name" value="1-deoxy-D-xylulose-5-phosphate reductoisomerase, C-terminal domain"/>
    <property type="match status" value="1"/>
</dbReference>
<dbReference type="SUPFAM" id="SSF55347">
    <property type="entry name" value="Glyceraldehyde-3-phosphate dehydrogenase-like, C-terminal domain"/>
    <property type="match status" value="1"/>
</dbReference>
<dbReference type="SUPFAM" id="SSF51735">
    <property type="entry name" value="NAD(P)-binding Rossmann-fold domains"/>
    <property type="match status" value="1"/>
</dbReference>
<sequence>MTTGKTAPRRLSIFGSTGSIGRNTLNVVEHLGGRDNFEISVLTGNGNVELLARQAKASGARLAVTASDRHYDSLKSALSGSGIAVASGKSGLMEAADCEADWVMAAIVGTAGLAPTLAAARRGADIALANKECLVSAGDLFLKSIREGGGRLLPVDSEHNAIFQVLEENQRHAVERVVLTASGGPFRTASLKEMADVTVETARAHPNWSMGLKISIDSASMFNKALEMIEARHLFGLTPDQIEVILHPQSIIHSMVGYTDGSVLAQLGAPDMRTAIGYALSFPRRPNLPIERLDFARLARLDFEAPDEVRFPALRLARLAMTRGGVQGAVLNGAKEVALEAFIAGRLSFLAMADITERVMDDLAHLPPAAEMDDVFSADSQARQRASQLMKLDLVG</sequence>
<feature type="chain" id="PRO_1000098513" description="1-deoxy-D-xylulose 5-phosphate reductoisomerase">
    <location>
        <begin position="1"/>
        <end position="396"/>
    </location>
</feature>
<feature type="binding site" evidence="1">
    <location>
        <position position="17"/>
    </location>
    <ligand>
        <name>NADPH</name>
        <dbReference type="ChEBI" id="CHEBI:57783"/>
    </ligand>
</feature>
<feature type="binding site" evidence="1">
    <location>
        <position position="18"/>
    </location>
    <ligand>
        <name>NADPH</name>
        <dbReference type="ChEBI" id="CHEBI:57783"/>
    </ligand>
</feature>
<feature type="binding site" evidence="1">
    <location>
        <position position="19"/>
    </location>
    <ligand>
        <name>NADPH</name>
        <dbReference type="ChEBI" id="CHEBI:57783"/>
    </ligand>
</feature>
<feature type="binding site" evidence="1">
    <location>
        <position position="20"/>
    </location>
    <ligand>
        <name>NADPH</name>
        <dbReference type="ChEBI" id="CHEBI:57783"/>
    </ligand>
</feature>
<feature type="binding site" evidence="1">
    <location>
        <position position="47"/>
    </location>
    <ligand>
        <name>NADPH</name>
        <dbReference type="ChEBI" id="CHEBI:57783"/>
    </ligand>
</feature>
<feature type="binding site" evidence="1">
    <location>
        <position position="130"/>
    </location>
    <ligand>
        <name>NADPH</name>
        <dbReference type="ChEBI" id="CHEBI:57783"/>
    </ligand>
</feature>
<feature type="binding site" evidence="1">
    <location>
        <position position="131"/>
    </location>
    <ligand>
        <name>1-deoxy-D-xylulose 5-phosphate</name>
        <dbReference type="ChEBI" id="CHEBI:57792"/>
    </ligand>
</feature>
<feature type="binding site" evidence="1">
    <location>
        <position position="132"/>
    </location>
    <ligand>
        <name>NADPH</name>
        <dbReference type="ChEBI" id="CHEBI:57783"/>
    </ligand>
</feature>
<feature type="binding site" evidence="1">
    <location>
        <position position="156"/>
    </location>
    <ligand>
        <name>Mn(2+)</name>
        <dbReference type="ChEBI" id="CHEBI:29035"/>
    </ligand>
</feature>
<feature type="binding site" evidence="1">
    <location>
        <position position="157"/>
    </location>
    <ligand>
        <name>1-deoxy-D-xylulose 5-phosphate</name>
        <dbReference type="ChEBI" id="CHEBI:57792"/>
    </ligand>
</feature>
<feature type="binding site" evidence="1">
    <location>
        <position position="158"/>
    </location>
    <ligand>
        <name>1-deoxy-D-xylulose 5-phosphate</name>
        <dbReference type="ChEBI" id="CHEBI:57792"/>
    </ligand>
</feature>
<feature type="binding site" evidence="1">
    <location>
        <position position="158"/>
    </location>
    <ligand>
        <name>Mn(2+)</name>
        <dbReference type="ChEBI" id="CHEBI:29035"/>
    </ligand>
</feature>
<feature type="binding site" evidence="1">
    <location>
        <position position="182"/>
    </location>
    <ligand>
        <name>1-deoxy-D-xylulose 5-phosphate</name>
        <dbReference type="ChEBI" id="CHEBI:57792"/>
    </ligand>
</feature>
<feature type="binding site" evidence="1">
    <location>
        <position position="205"/>
    </location>
    <ligand>
        <name>1-deoxy-D-xylulose 5-phosphate</name>
        <dbReference type="ChEBI" id="CHEBI:57792"/>
    </ligand>
</feature>
<feature type="binding site" evidence="1">
    <location>
        <position position="211"/>
    </location>
    <ligand>
        <name>NADPH</name>
        <dbReference type="ChEBI" id="CHEBI:57783"/>
    </ligand>
</feature>
<feature type="binding site" evidence="1">
    <location>
        <position position="218"/>
    </location>
    <ligand>
        <name>1-deoxy-D-xylulose 5-phosphate</name>
        <dbReference type="ChEBI" id="CHEBI:57792"/>
    </ligand>
</feature>
<feature type="binding site" evidence="1">
    <location>
        <position position="223"/>
    </location>
    <ligand>
        <name>1-deoxy-D-xylulose 5-phosphate</name>
        <dbReference type="ChEBI" id="CHEBI:57792"/>
    </ligand>
</feature>
<feature type="binding site" evidence="1">
    <location>
        <position position="224"/>
    </location>
    <ligand>
        <name>1-deoxy-D-xylulose 5-phosphate</name>
        <dbReference type="ChEBI" id="CHEBI:57792"/>
    </ligand>
</feature>
<feature type="binding site" evidence="1">
    <location>
        <position position="227"/>
    </location>
    <ligand>
        <name>1-deoxy-D-xylulose 5-phosphate</name>
        <dbReference type="ChEBI" id="CHEBI:57792"/>
    </ligand>
</feature>
<feature type="binding site" evidence="1">
    <location>
        <position position="227"/>
    </location>
    <ligand>
        <name>Mn(2+)</name>
        <dbReference type="ChEBI" id="CHEBI:29035"/>
    </ligand>
</feature>
<organism>
    <name type="scientific">Rhizobium etli (strain CIAT 652)</name>
    <dbReference type="NCBI Taxonomy" id="491916"/>
    <lineage>
        <taxon>Bacteria</taxon>
        <taxon>Pseudomonadati</taxon>
        <taxon>Pseudomonadota</taxon>
        <taxon>Alphaproteobacteria</taxon>
        <taxon>Hyphomicrobiales</taxon>
        <taxon>Rhizobiaceae</taxon>
        <taxon>Rhizobium/Agrobacterium group</taxon>
        <taxon>Rhizobium</taxon>
    </lineage>
</organism>
<gene>
    <name evidence="1" type="primary">dxr</name>
    <name type="ordered locus">RHECIAT_CH0004120</name>
</gene>
<accession>B3PQ37</accession>